<protein>
    <recommendedName>
        <fullName evidence="1">GTP cyclohydrolase FolE2</fullName>
        <ecNumber evidence="1">3.5.4.16</ecNumber>
    </recommendedName>
</protein>
<accession>A0LQR3</accession>
<reference key="1">
    <citation type="submission" date="2006-10" db="EMBL/GenBank/DDBJ databases">
        <title>Complete sequence of Syntrophobacter fumaroxidans MPOB.</title>
        <authorList>
            <consortium name="US DOE Joint Genome Institute"/>
            <person name="Copeland A."/>
            <person name="Lucas S."/>
            <person name="Lapidus A."/>
            <person name="Barry K."/>
            <person name="Detter J.C."/>
            <person name="Glavina del Rio T."/>
            <person name="Hammon N."/>
            <person name="Israni S."/>
            <person name="Pitluck S."/>
            <person name="Goltsman E.G."/>
            <person name="Martinez M."/>
            <person name="Schmutz J."/>
            <person name="Larimer F."/>
            <person name="Land M."/>
            <person name="Hauser L."/>
            <person name="Kyrpides N."/>
            <person name="Kim E."/>
            <person name="Boone D.R."/>
            <person name="Brockman F."/>
            <person name="Culley D."/>
            <person name="Ferry J."/>
            <person name="Gunsalus R."/>
            <person name="McInerney M.J."/>
            <person name="Morrison M."/>
            <person name="Plugge C."/>
            <person name="Rohlin L."/>
            <person name="Scholten J."/>
            <person name="Sieber J."/>
            <person name="Stams A.J.M."/>
            <person name="Worm P."/>
            <person name="Henstra A.M."/>
            <person name="Richardson P."/>
        </authorList>
    </citation>
    <scope>NUCLEOTIDE SEQUENCE [LARGE SCALE GENOMIC DNA]</scope>
    <source>
        <strain>DSM 10017 / MPOB</strain>
    </source>
</reference>
<comment type="function">
    <text evidence="1">Converts GTP to 7,8-dihydroneopterin triphosphate.</text>
</comment>
<comment type="catalytic activity">
    <reaction evidence="1">
        <text>GTP + H2O = 7,8-dihydroneopterin 3'-triphosphate + formate + H(+)</text>
        <dbReference type="Rhea" id="RHEA:17473"/>
        <dbReference type="ChEBI" id="CHEBI:15377"/>
        <dbReference type="ChEBI" id="CHEBI:15378"/>
        <dbReference type="ChEBI" id="CHEBI:15740"/>
        <dbReference type="ChEBI" id="CHEBI:37565"/>
        <dbReference type="ChEBI" id="CHEBI:58462"/>
        <dbReference type="EC" id="3.5.4.16"/>
    </reaction>
</comment>
<comment type="pathway">
    <text evidence="1">Cofactor biosynthesis; 7,8-dihydroneopterin triphosphate biosynthesis; 7,8-dihydroneopterin triphosphate from GTP: step 1/1.</text>
</comment>
<comment type="similarity">
    <text evidence="1">Belongs to the GTP cyclohydrolase IV family.</text>
</comment>
<sequence>MIDVQSRFDSRNIRVDKVGVKDIRYPITVMDKTNGIQHTVASVNMYVNLPREFKGTHMSRFIEILNEFHGNLDIREFPSILQSVQEHLSAESAHLELSFSYFIKKLSPVTGCAGLMEYGCRVAGSLDSNRGHDLVLEVNVPISTVCPCSKEISSYGAHNQRGMVRLAVRFKKFVWIEDLVRLVECAASSEVYSVLKRPDEKFVTESAFDNPKFVEDVVRDIAKELKADQNISWFLVDVENFESIHNHSAYACIERSK</sequence>
<keyword id="KW-0378">Hydrolase</keyword>
<keyword id="KW-1185">Reference proteome</keyword>
<name>GCH4_SYNFM</name>
<gene>
    <name evidence="1" type="primary">folE2</name>
    <name type="ordered locus">Sfum_4100</name>
</gene>
<feature type="chain" id="PRO_0000289527" description="GTP cyclohydrolase FolE2">
    <location>
        <begin position="1"/>
        <end position="257"/>
    </location>
</feature>
<feature type="site" description="May be catalytically important" evidence="1">
    <location>
        <position position="146"/>
    </location>
</feature>
<organism>
    <name type="scientific">Syntrophobacter fumaroxidans (strain DSM 10017 / MPOB)</name>
    <dbReference type="NCBI Taxonomy" id="335543"/>
    <lineage>
        <taxon>Bacteria</taxon>
        <taxon>Pseudomonadati</taxon>
        <taxon>Thermodesulfobacteriota</taxon>
        <taxon>Syntrophobacteria</taxon>
        <taxon>Syntrophobacterales</taxon>
        <taxon>Syntrophobacteraceae</taxon>
        <taxon>Syntrophobacter</taxon>
    </lineage>
</organism>
<evidence type="ECO:0000255" key="1">
    <source>
        <dbReference type="HAMAP-Rule" id="MF_01527"/>
    </source>
</evidence>
<proteinExistence type="inferred from homology"/>
<dbReference type="EC" id="3.5.4.16" evidence="1"/>
<dbReference type="EMBL" id="CP000478">
    <property type="protein sequence ID" value="ABK19765.1"/>
    <property type="molecule type" value="Genomic_DNA"/>
</dbReference>
<dbReference type="RefSeq" id="WP_011700878.1">
    <property type="nucleotide sequence ID" value="NC_008554.1"/>
</dbReference>
<dbReference type="SMR" id="A0LQR3"/>
<dbReference type="STRING" id="335543.Sfum_4100"/>
<dbReference type="KEGG" id="sfu:Sfum_4100"/>
<dbReference type="eggNOG" id="COG1469">
    <property type="taxonomic scope" value="Bacteria"/>
</dbReference>
<dbReference type="HOGENOM" id="CLU_062816_1_1_7"/>
<dbReference type="InParanoid" id="A0LQR3"/>
<dbReference type="OrthoDB" id="9774824at2"/>
<dbReference type="UniPathway" id="UPA00848">
    <property type="reaction ID" value="UER00151"/>
</dbReference>
<dbReference type="Proteomes" id="UP000001784">
    <property type="component" value="Chromosome"/>
</dbReference>
<dbReference type="GO" id="GO:0003934">
    <property type="term" value="F:GTP cyclohydrolase I activity"/>
    <property type="evidence" value="ECO:0007669"/>
    <property type="project" value="UniProtKB-UniRule"/>
</dbReference>
<dbReference type="GO" id="GO:0046654">
    <property type="term" value="P:tetrahydrofolate biosynthetic process"/>
    <property type="evidence" value="ECO:0007669"/>
    <property type="project" value="UniProtKB-UniRule"/>
</dbReference>
<dbReference type="Gene3D" id="3.10.270.10">
    <property type="entry name" value="Urate Oxidase"/>
    <property type="match status" value="1"/>
</dbReference>
<dbReference type="HAMAP" id="MF_01527_B">
    <property type="entry name" value="GTP_cyclohydrol_B"/>
    <property type="match status" value="1"/>
</dbReference>
<dbReference type="InterPro" id="IPR022838">
    <property type="entry name" value="GTP_cyclohydrolase_FolE2"/>
</dbReference>
<dbReference type="InterPro" id="IPR003801">
    <property type="entry name" value="GTP_cyclohydrolase_FolE2/MptA"/>
</dbReference>
<dbReference type="NCBIfam" id="NF010200">
    <property type="entry name" value="PRK13674.1-1"/>
    <property type="match status" value="1"/>
</dbReference>
<dbReference type="PANTHER" id="PTHR36445">
    <property type="entry name" value="GTP CYCLOHYDROLASE MPTA"/>
    <property type="match status" value="1"/>
</dbReference>
<dbReference type="PANTHER" id="PTHR36445:SF1">
    <property type="entry name" value="GTP CYCLOHYDROLASE MPTA"/>
    <property type="match status" value="1"/>
</dbReference>
<dbReference type="Pfam" id="PF02649">
    <property type="entry name" value="GCHY-1"/>
    <property type="match status" value="1"/>
</dbReference>